<gene>
    <name evidence="7" type="primary">PTM</name>
    <name evidence="8" type="synonym">DDP1</name>
    <name evidence="10" type="ordered locus">At5g35210</name>
    <name evidence="11" type="ORF">K3D20.8</name>
</gene>
<organism>
    <name type="scientific">Arabidopsis thaliana</name>
    <name type="common">Mouse-ear cress</name>
    <dbReference type="NCBI Taxonomy" id="3702"/>
    <lineage>
        <taxon>Eukaryota</taxon>
        <taxon>Viridiplantae</taxon>
        <taxon>Streptophyta</taxon>
        <taxon>Embryophyta</taxon>
        <taxon>Tracheophyta</taxon>
        <taxon>Spermatophyta</taxon>
        <taxon>Magnoliopsida</taxon>
        <taxon>eudicotyledons</taxon>
        <taxon>Gunneridae</taxon>
        <taxon>Pentapetalae</taxon>
        <taxon>rosids</taxon>
        <taxon>malvids</taxon>
        <taxon>Brassicales</taxon>
        <taxon>Brassicaceae</taxon>
        <taxon>Camelineae</taxon>
        <taxon>Arabidopsis</taxon>
    </lineage>
</organism>
<comment type="function">
    <text evidence="5">Membrane-bound transcription factor required for the plastid-to-nucleus retrograde signaling. Functions in multiple retrograde pathways. The plastid-to-nucleus signal plays an important role in the coordinated expression of both nuclear- and chloroplast-localized genes that encode photosynthesis-related proteins. In the nucleus, activates ABI4 transcription in a PHD-dependent manner associated with histone modifications. Localized primarily in the chloroplast outer membrane as dormant form and, in response to retrograde signals, is released from the membrane through proteolytic cleavage and its cleaved fragment containing the transcription factor domain is redistributed to the nucleus, where it regulates the expression of particular nuclear genes.</text>
</comment>
<comment type="subunit">
    <text evidence="6">Interacts (via the DDT domain) with CHR11 (via C-terminus).</text>
</comment>
<comment type="subcellular location">
    <subcellularLocation>
        <location evidence="5">Plastid</location>
        <location evidence="5">Chloroplast outer membrane</location>
        <topology evidence="1">Multi-pass membrane protein</topology>
    </subcellularLocation>
    <subcellularLocation>
        <location evidence="5">Nucleus</location>
    </subcellularLocation>
    <text evidence="5">Localized primarily in the chloroplast outer membrane as dormant form and, upon specific stimulation, is released from the membrane through proteolytic cleavage, and its cleaved fragment containing the transcription factor domain is redistributed to the nucleus, where it regulates the expression of particular nuclear genes.</text>
</comment>
<comment type="alternative products">
    <event type="alternative splicing"/>
    <isoform>
        <id>F4JYC8-1</id>
        <name>1</name>
        <sequence type="displayed"/>
    </isoform>
    <isoform>
        <id>F4JYC8-2</id>
        <name>2</name>
        <sequence type="described" ref="VSP_058014 VSP_058015"/>
    </isoform>
</comment>
<comment type="disruption phenotype">
    <text evidence="5">No visible phenotype under normal growth conditions.</text>
</comment>
<comment type="sequence caution" evidence="9">
    <conflict type="erroneous gene model prediction">
        <sequence resource="EMBL-CDS" id="BAA98208"/>
    </conflict>
</comment>
<comment type="sequence caution" evidence="9">
    <conflict type="erroneous initiation">
        <sequence resource="EMBL-CDS" id="BAD93752"/>
    </conflict>
    <text>Truncated N-terminus.</text>
</comment>
<proteinExistence type="evidence at protein level"/>
<accession>F4JYC8</accession>
<accession>F4JYC9</accession>
<accession>Q56XE1</accession>
<accession>Q9LHR7</accession>
<evidence type="ECO:0000255" key="1"/>
<evidence type="ECO:0000255" key="2">
    <source>
        <dbReference type="PROSITE-ProRule" id="PRU00063"/>
    </source>
</evidence>
<evidence type="ECO:0000255" key="3">
    <source>
        <dbReference type="PROSITE-ProRule" id="PRU00146"/>
    </source>
</evidence>
<evidence type="ECO:0000256" key="4">
    <source>
        <dbReference type="SAM" id="MobiDB-lite"/>
    </source>
</evidence>
<evidence type="ECO:0000269" key="5">
    <source>
    </source>
</evidence>
<evidence type="ECO:0000269" key="6">
    <source>
    </source>
</evidence>
<evidence type="ECO:0000303" key="7">
    <source>
    </source>
</evidence>
<evidence type="ECO:0000303" key="8">
    <source>
    </source>
</evidence>
<evidence type="ECO:0000305" key="9"/>
<evidence type="ECO:0000312" key="10">
    <source>
        <dbReference type="Araport" id="AT5G35210"/>
    </source>
</evidence>
<evidence type="ECO:0000312" key="11">
    <source>
        <dbReference type="EMBL" id="BAA98208.1"/>
    </source>
</evidence>
<sequence length="1706" mass="189210">MEAKVPRPRGRPRKRQRLEDDNRKLNNRGKKQVLEVEPAVPISLLGCYMLKDFDDNEVFLGKIVSYDTGLYRVIYEDGDCEELESGDLRRLIISDSYLDDELRVRRKKLDKLILKKEEKKKRNSPENKAVELPNQVNGVQARAVTNSEDGDSYSDSESSESGDKRGSDLEIEAPLVPPVDLPPSSGTIGIPEEAVAHLLSVYGFLRSFSFQLYICPFELNDFVGALYFSGPNSLLDAVHVALLRALKGHLERLSSSKSVLASKCLRCIDWSLLDVLTWPVYLVQYFTAMGHASGPQWNIFNKFVVEIEYYSLPIGMKLKILQILCDDIFDVADLRDEIDAREESEIGFDPDRVATGLLENVPRRVHPRFAKTSAYKEKEVTDSSTNESKDLDSRCTNGGSNEVSSDLDGNSDECRICGMDGTLLCCDGCPLAYHSRCIGVVKMYIPDGPWFCPECTINKKGPKIAHGTSLRGAVQFGMDPHGRLFLGTCNHLLVLNISVNGDAVVKYYNVNDISKVVLVLISASSHTLEYVEICKAITQYWDLPEGISLREGEIGLTQAKDREDGKVSEITKSDSANISNRSHTQTVFDLPTSTLGNTNSAVTGGSCGIQGKKLAARVTYLGLSFKPNTYNNHYTNGELAVSAAASLAVLSSEETHEPDLRKYNSAKKAASSNILEQMKAFSLVAPRFFWPSPDKKEITRERCGWCHSCRLTSASRRGCMLNAAVAGATKGAMKIFSGLFPLKNGEGVLSSIAAYILYLEESLRGLIAGPFLSESPRKQWRKQVEEASTCKALKAPLLELEENICSIALSCDWFKQMDDWLIEHSIFQSAPVTLGVPQRRGPGRTKQNTQAEVTAEGSDADSFTWWRGGKLSKVILLKAVLSQPATKKAAWQGGSKKIPGLNYGDASYIPRRSRRSFWKAAVESSKNISQLALQVRYLDMSLRWRELVRPDQNLQNVKGPETDVAIFRNARICDKKLSDNKVSYGVFFGNQKHLPSRVMKNIMEVEKTQDRNEKYWLQEAHVPLYLIKEFEESLHRVQMPSSTKKPSKKLSKLQRKQLKASLMDIFSYIASRRDKMEKCSCASCDHDVLLRDTTTCSSCHGFCHKDCTSMSQHTNGNVEVLVTCKRCYLSKTRVPTNINHRQSTAPQFTINVRHQNAVIPVIKVKPPSQQLSSQKPRENTSGVKQVTPDSSVSKSKQKTLSCGVIWRKKNVEDTGVDFRNQNILLAGRSDKPSLEPVCGICLLPYNPGLTYIHCTKCEKWFHTEAVKLKDSQIPEVVGFKCCKCRRIRSPDCPYMDPKLKEQKQIKRIVFTNQKQRQGNSGLDSDSERMSEQKDSKPSTPLPATPLYPPDDVFIPEDDPLLVSVSKVKQITPSSFDLEWSTTAFAPGPQKLPVRRQVKREDSDAAYPELHPIVKPEAEEQALPVLTEWDLSGELLFDYEDMEFEPQTYFSLTELLTADDSGGGQYQENGDMVVSGNPQFEPTEKEECEDDMGPCQRCLQMDPAPDLLCTVCGLLIHSHCSPWSALPGSSWSCGQCRIRALGSITLGSFGAITQFKSILPDRSTKVDISLAGPFAGAALSVSMFAVGLFLSTEPDAANDLVQVPSMLFQGSLLLGLISRATLGYAALHAATVSIHPLVIAGWCGLTTTAFNMLPVGCLDGGRAVQGAFGKNALVTFGLSTYVMLGLRVLGGPLALPWGLYVLICRNT</sequence>
<reference key="1">
    <citation type="submission" date="2000-05" db="EMBL/GenBank/DDBJ databases">
        <title>Structural analysis of Arabidopsis thaliana chromosome 5. XI.</title>
        <authorList>
            <person name="Kaneko T."/>
            <person name="Katoh T."/>
            <person name="Asamizu E."/>
            <person name="Sato S."/>
            <person name="Nakamura Y."/>
            <person name="Kotani H."/>
            <person name="Tabata S."/>
        </authorList>
    </citation>
    <scope>NUCLEOTIDE SEQUENCE [LARGE SCALE GENOMIC DNA]</scope>
    <source>
        <strain>cv. Columbia</strain>
    </source>
</reference>
<reference key="2">
    <citation type="journal article" date="2017" name="Plant J.">
        <title>Araport11: a complete reannotation of the Arabidopsis thaliana reference genome.</title>
        <authorList>
            <person name="Cheng C.Y."/>
            <person name="Krishnakumar V."/>
            <person name="Chan A.P."/>
            <person name="Thibaud-Nissen F."/>
            <person name="Schobel S."/>
            <person name="Town C.D."/>
        </authorList>
    </citation>
    <scope>GENOME REANNOTATION</scope>
    <source>
        <strain>cv. Columbia</strain>
    </source>
</reference>
<reference key="3">
    <citation type="submission" date="2005-03" db="EMBL/GenBank/DDBJ databases">
        <title>Large-scale analysis of RIKEN Arabidopsis full-length (RAFL) cDNAs.</title>
        <authorList>
            <person name="Totoki Y."/>
            <person name="Seki M."/>
            <person name="Ishida J."/>
            <person name="Nakajima M."/>
            <person name="Enju A."/>
            <person name="Kamiya A."/>
            <person name="Narusaka M."/>
            <person name="Shin-i T."/>
            <person name="Nakagawa M."/>
            <person name="Sakamoto N."/>
            <person name="Oishi K."/>
            <person name="Kohara Y."/>
            <person name="Kobayashi M."/>
            <person name="Toyoda A."/>
            <person name="Sakaki Y."/>
            <person name="Sakurai T."/>
            <person name="Iida K."/>
            <person name="Akiyama K."/>
            <person name="Satou M."/>
            <person name="Toyoda T."/>
            <person name="Konagaya A."/>
            <person name="Carninci P."/>
            <person name="Kawai J."/>
            <person name="Hayashizaki Y."/>
            <person name="Shinozaki K."/>
        </authorList>
    </citation>
    <scope>NUCLEOTIDE SEQUENCE [LARGE SCALE MRNA] OF 1271-1539 (ISOFORM 2)</scope>
    <source>
        <strain>cv. Columbia</strain>
    </source>
</reference>
<reference key="4">
    <citation type="journal article" date="2011" name="Nat. Commun.">
        <title>A chloroplast envelope-bound PHD transcription factor mediates chloroplast signals to the nucleus.</title>
        <authorList>
            <person name="Sun X."/>
            <person name="Feng P."/>
            <person name="Xu X."/>
            <person name="Guo H."/>
            <person name="Ma J."/>
            <person name="Chi W."/>
            <person name="Lin R."/>
            <person name="Lu C."/>
            <person name="Zhang L."/>
        </authorList>
    </citation>
    <scope>FUNCTION</scope>
    <scope>SUBCELLULAR LOCATION</scope>
    <scope>DISRUPTION PHENOTYPE</scope>
</reference>
<reference key="5">
    <citation type="journal article" date="2013" name="J. Integr. Plant Biol.">
        <title>SLIDE, the protein interacting domain of Imitation Switch remodelers, binds DDT-domain proteins of different subfamilies in chromatin remodeling complexes.</title>
        <authorList>
            <person name="Dong J."/>
            <person name="Gao Z."/>
            <person name="Liu S."/>
            <person name="Li G."/>
            <person name="Yang Z."/>
            <person name="Huang H."/>
            <person name="Xu L."/>
        </authorList>
    </citation>
    <scope>INTERACTION WITH CHR11</scope>
</reference>
<dbReference type="EMBL" id="AP002031">
    <property type="protein sequence ID" value="BAA98208.1"/>
    <property type="status" value="ALT_SEQ"/>
    <property type="molecule type" value="Genomic_DNA"/>
</dbReference>
<dbReference type="EMBL" id="CP002688">
    <property type="protein sequence ID" value="AED93946.1"/>
    <property type="molecule type" value="Genomic_DNA"/>
</dbReference>
<dbReference type="EMBL" id="AK221734">
    <property type="protein sequence ID" value="BAD93752.1"/>
    <property type="status" value="ALT_INIT"/>
    <property type="molecule type" value="mRNA"/>
</dbReference>
<dbReference type="RefSeq" id="NP_198371.3">
    <molecule id="F4JYC8-2"/>
    <property type="nucleotide sequence ID" value="NM_122912.4"/>
</dbReference>
<dbReference type="SMR" id="F4JYC8"/>
<dbReference type="FunCoup" id="F4JYC8">
    <property type="interactions" value="1629"/>
</dbReference>
<dbReference type="STRING" id="3702.F4JYC8"/>
<dbReference type="MEROPS" id="M50.A02"/>
<dbReference type="iPTMnet" id="F4JYC8"/>
<dbReference type="PaxDb" id="3702-AT5G35210.1"/>
<dbReference type="ProteomicsDB" id="226434">
    <molecule id="F4JYC8-1"/>
</dbReference>
<dbReference type="EnsemblPlants" id="AT5G35210.2">
    <molecule id="F4JYC8-2"/>
    <property type="protein sequence ID" value="AT5G35210.2"/>
    <property type="gene ID" value="AT5G35210"/>
</dbReference>
<dbReference type="GeneID" id="833475"/>
<dbReference type="Gramene" id="AT5G35210.2">
    <molecule id="F4JYC8-2"/>
    <property type="protein sequence ID" value="AT5G35210.2"/>
    <property type="gene ID" value="AT5G35210"/>
</dbReference>
<dbReference type="KEGG" id="ath:AT5G35210"/>
<dbReference type="Araport" id="AT5G35210"/>
<dbReference type="TAIR" id="AT5G35210">
    <property type="gene designation" value="PTM"/>
</dbReference>
<dbReference type="eggNOG" id="KOG1473">
    <property type="taxonomic scope" value="Eukaryota"/>
</dbReference>
<dbReference type="InParanoid" id="F4JYC8"/>
<dbReference type="OMA" id="NASICHK"/>
<dbReference type="OrthoDB" id="784962at2759"/>
<dbReference type="PRO" id="PR:F4JYC8"/>
<dbReference type="Proteomes" id="UP000006548">
    <property type="component" value="Chromosome 5"/>
</dbReference>
<dbReference type="ExpressionAtlas" id="F4JYC8">
    <property type="expression patterns" value="baseline and differential"/>
</dbReference>
<dbReference type="GO" id="GO:0009941">
    <property type="term" value="C:chloroplast envelope"/>
    <property type="evidence" value="ECO:0007005"/>
    <property type="project" value="TAIR"/>
</dbReference>
<dbReference type="GO" id="GO:0009707">
    <property type="term" value="C:chloroplast outer membrane"/>
    <property type="evidence" value="ECO:0000314"/>
    <property type="project" value="UniProtKB"/>
</dbReference>
<dbReference type="GO" id="GO:0031010">
    <property type="term" value="C:ISWI-type complex"/>
    <property type="evidence" value="ECO:0000314"/>
    <property type="project" value="TAIR"/>
</dbReference>
<dbReference type="GO" id="GO:0005634">
    <property type="term" value="C:nucleus"/>
    <property type="evidence" value="ECO:0000314"/>
    <property type="project" value="UniProtKB"/>
</dbReference>
<dbReference type="GO" id="GO:0035064">
    <property type="term" value="F:methylated histone binding"/>
    <property type="evidence" value="ECO:0000314"/>
    <property type="project" value="TAIR"/>
</dbReference>
<dbReference type="GO" id="GO:0008270">
    <property type="term" value="F:zinc ion binding"/>
    <property type="evidence" value="ECO:0007669"/>
    <property type="project" value="UniProtKB-KW"/>
</dbReference>
<dbReference type="GO" id="GO:0010019">
    <property type="term" value="P:chloroplast-nucleus signaling pathway"/>
    <property type="evidence" value="ECO:0000314"/>
    <property type="project" value="TAIR"/>
</dbReference>
<dbReference type="GO" id="GO:0045893">
    <property type="term" value="P:positive regulation of DNA-templated transcription"/>
    <property type="evidence" value="ECO:0000314"/>
    <property type="project" value="TAIR"/>
</dbReference>
<dbReference type="GO" id="GO:0006508">
    <property type="term" value="P:proteolysis"/>
    <property type="evidence" value="ECO:0007669"/>
    <property type="project" value="InterPro"/>
</dbReference>
<dbReference type="CDD" id="cd15532">
    <property type="entry name" value="PHD2_CHD_II"/>
    <property type="match status" value="1"/>
</dbReference>
<dbReference type="CDD" id="cd15517">
    <property type="entry name" value="PHD_TCF19_like"/>
    <property type="match status" value="1"/>
</dbReference>
<dbReference type="CDD" id="cd06160">
    <property type="entry name" value="S2P-M50_like_2"/>
    <property type="match status" value="1"/>
</dbReference>
<dbReference type="CDD" id="cd20401">
    <property type="entry name" value="Tudor_AtPTM-like"/>
    <property type="match status" value="1"/>
</dbReference>
<dbReference type="Gene3D" id="3.30.40.10">
    <property type="entry name" value="Zinc/RING finger domain, C3HC4 (zinc finger)"/>
    <property type="match status" value="2"/>
</dbReference>
<dbReference type="InterPro" id="IPR056618">
    <property type="entry name" value="Chromo_PTM"/>
</dbReference>
<dbReference type="InterPro" id="IPR018501">
    <property type="entry name" value="DDT_dom"/>
</dbReference>
<dbReference type="InterPro" id="IPR008915">
    <property type="entry name" value="Peptidase_M50"/>
</dbReference>
<dbReference type="InterPro" id="IPR047365">
    <property type="entry name" value="Tudor_AtPTM-like"/>
</dbReference>
<dbReference type="InterPro" id="IPR028942">
    <property type="entry name" value="WHIM1_dom"/>
</dbReference>
<dbReference type="InterPro" id="IPR019786">
    <property type="entry name" value="Zinc_finger_PHD-type_CS"/>
</dbReference>
<dbReference type="InterPro" id="IPR011011">
    <property type="entry name" value="Znf_FYVE_PHD"/>
</dbReference>
<dbReference type="InterPro" id="IPR001965">
    <property type="entry name" value="Znf_PHD"/>
</dbReference>
<dbReference type="InterPro" id="IPR019787">
    <property type="entry name" value="Znf_PHD-finger"/>
</dbReference>
<dbReference type="InterPro" id="IPR013083">
    <property type="entry name" value="Znf_RING/FYVE/PHD"/>
</dbReference>
<dbReference type="PANTHER" id="PTHR46508:SF7">
    <property type="entry name" value="DDT DOMAIN-CONTAINING PROTEIN PTM"/>
    <property type="match status" value="1"/>
</dbReference>
<dbReference type="PANTHER" id="PTHR46508">
    <property type="entry name" value="PHD FINGER FAMILY PROTEIN"/>
    <property type="match status" value="1"/>
</dbReference>
<dbReference type="Pfam" id="PF24294">
    <property type="entry name" value="Chromo_PTM"/>
    <property type="match status" value="1"/>
</dbReference>
<dbReference type="Pfam" id="PF02791">
    <property type="entry name" value="DDT"/>
    <property type="match status" value="1"/>
</dbReference>
<dbReference type="Pfam" id="PF02163">
    <property type="entry name" value="Peptidase_M50"/>
    <property type="match status" value="1"/>
</dbReference>
<dbReference type="Pfam" id="PF00628">
    <property type="entry name" value="PHD"/>
    <property type="match status" value="1"/>
</dbReference>
<dbReference type="Pfam" id="PF21743">
    <property type="entry name" value="PTM_DIR17_Tudor"/>
    <property type="match status" value="1"/>
</dbReference>
<dbReference type="Pfam" id="PF15612">
    <property type="entry name" value="WHIM1"/>
    <property type="match status" value="1"/>
</dbReference>
<dbReference type="SMART" id="SM00571">
    <property type="entry name" value="DDT"/>
    <property type="match status" value="1"/>
</dbReference>
<dbReference type="SMART" id="SM00249">
    <property type="entry name" value="PHD"/>
    <property type="match status" value="4"/>
</dbReference>
<dbReference type="SUPFAM" id="SSF57903">
    <property type="entry name" value="FYVE/PHD zinc finger"/>
    <property type="match status" value="3"/>
</dbReference>
<dbReference type="PROSITE" id="PS50827">
    <property type="entry name" value="DDT"/>
    <property type="match status" value="1"/>
</dbReference>
<dbReference type="PROSITE" id="PS01359">
    <property type="entry name" value="ZF_PHD_1"/>
    <property type="match status" value="1"/>
</dbReference>
<dbReference type="PROSITE" id="PS50016">
    <property type="entry name" value="ZF_PHD_2"/>
    <property type="match status" value="1"/>
</dbReference>
<feature type="chain" id="PRO_0000435121" description="DDT domain-containing protein PTM">
    <location>
        <begin position="1"/>
        <end position="1706"/>
    </location>
</feature>
<feature type="transmembrane region" description="Helical" evidence="1">
    <location>
        <begin position="1539"/>
        <end position="1559"/>
    </location>
</feature>
<feature type="transmembrane region" description="Helical" evidence="1">
    <location>
        <begin position="1569"/>
        <end position="1589"/>
    </location>
</feature>
<feature type="transmembrane region" description="Helical" evidence="1">
    <location>
        <begin position="1596"/>
        <end position="1616"/>
    </location>
</feature>
<feature type="transmembrane region" description="Helical" evidence="1">
    <location>
        <begin position="1624"/>
        <end position="1644"/>
    </location>
</feature>
<feature type="transmembrane region" description="Helical" evidence="1">
    <location>
        <begin position="1682"/>
        <end position="1702"/>
    </location>
</feature>
<feature type="domain" description="DDT" evidence="2">
    <location>
        <begin position="192"/>
        <end position="252"/>
    </location>
</feature>
<feature type="zinc finger region" description="PHD-type 1" evidence="3">
    <location>
        <begin position="411"/>
        <end position="458"/>
    </location>
</feature>
<feature type="region of interest" description="Disordered" evidence="4">
    <location>
        <begin position="1"/>
        <end position="27"/>
    </location>
</feature>
<feature type="region of interest" description="Disordered" evidence="4">
    <location>
        <begin position="144"/>
        <end position="168"/>
    </location>
</feature>
<feature type="region of interest" description="Disordered" evidence="4">
    <location>
        <begin position="375"/>
        <end position="408"/>
    </location>
</feature>
<feature type="region of interest" description="Disordered" evidence="4">
    <location>
        <begin position="1165"/>
        <end position="1194"/>
    </location>
</feature>
<feature type="region of interest" description="Disordered" evidence="4">
    <location>
        <begin position="1311"/>
        <end position="1345"/>
    </location>
</feature>
<feature type="short sequence motif" description="Nuclear localization signal" evidence="1">
    <location>
        <begin position="9"/>
        <end position="18"/>
    </location>
</feature>
<feature type="compositionally biased region" description="Basic residues" evidence="4">
    <location>
        <begin position="1"/>
        <end position="16"/>
    </location>
</feature>
<feature type="compositionally biased region" description="Acidic residues" evidence="4">
    <location>
        <begin position="148"/>
        <end position="160"/>
    </location>
</feature>
<feature type="compositionally biased region" description="Basic and acidic residues" evidence="4">
    <location>
        <begin position="375"/>
        <end position="393"/>
    </location>
</feature>
<feature type="compositionally biased region" description="Polar residues" evidence="4">
    <location>
        <begin position="394"/>
        <end position="408"/>
    </location>
</feature>
<feature type="compositionally biased region" description="Polar residues" evidence="4">
    <location>
        <begin position="1167"/>
        <end position="1194"/>
    </location>
</feature>
<feature type="compositionally biased region" description="Polar residues" evidence="4">
    <location>
        <begin position="1311"/>
        <end position="1323"/>
    </location>
</feature>
<feature type="compositionally biased region" description="Basic and acidic residues" evidence="4">
    <location>
        <begin position="1325"/>
        <end position="1336"/>
    </location>
</feature>
<feature type="splice variant" id="VSP_058014" description="In isoform 2.">
    <original>IRA</original>
    <variation>EWQ</variation>
    <location>
        <begin position="1537"/>
        <end position="1539"/>
    </location>
</feature>
<feature type="splice variant" id="VSP_058015" description="In isoform 2.">
    <location>
        <begin position="1540"/>
        <end position="1706"/>
    </location>
</feature>
<feature type="sequence conflict" description="In Ref. 3; BAD93752." evidence="9" ref="3">
    <original>D</original>
    <variation>G</variation>
    <location>
        <position position="1334"/>
    </location>
</feature>
<name>PTM_ARATH</name>
<protein>
    <recommendedName>
        <fullName evidence="9">DDT domain-containing protein PTM</fullName>
    </recommendedName>
    <alternativeName>
        <fullName evidence="9">DDT domain-containing protein 1</fullName>
    </alternativeName>
    <alternativeName>
        <fullName evidence="9">Membrane-bound transcription factor PTM</fullName>
    </alternativeName>
    <alternativeName>
        <fullName evidence="7">PHD type transcription factor with transmembrane domains</fullName>
    </alternativeName>
</protein>
<keyword id="KW-0025">Alternative splicing</keyword>
<keyword id="KW-0150">Chloroplast</keyword>
<keyword id="KW-0472">Membrane</keyword>
<keyword id="KW-0479">Metal-binding</keyword>
<keyword id="KW-0539">Nucleus</keyword>
<keyword id="KW-0934">Plastid</keyword>
<keyword id="KW-1002">Plastid outer membrane</keyword>
<keyword id="KW-1185">Reference proteome</keyword>
<keyword id="KW-0677">Repeat</keyword>
<keyword id="KW-0804">Transcription</keyword>
<keyword id="KW-0805">Transcription regulation</keyword>
<keyword id="KW-0812">Transmembrane</keyword>
<keyword id="KW-1133">Transmembrane helix</keyword>
<keyword id="KW-0862">Zinc</keyword>
<keyword id="KW-0863">Zinc-finger</keyword>